<keyword id="KW-1003">Cell membrane</keyword>
<keyword id="KW-0472">Membrane</keyword>
<organism>
    <name type="scientific">Bacillus anthracis (strain CDC 684 / NRRL 3495)</name>
    <dbReference type="NCBI Taxonomy" id="568206"/>
    <lineage>
        <taxon>Bacteria</taxon>
        <taxon>Bacillati</taxon>
        <taxon>Bacillota</taxon>
        <taxon>Bacilli</taxon>
        <taxon>Bacillales</taxon>
        <taxon>Bacillaceae</taxon>
        <taxon>Bacillus</taxon>
        <taxon>Bacillus cereus group</taxon>
    </lineage>
</organism>
<proteinExistence type="inferred from homology"/>
<accession>C3LB28</accession>
<dbReference type="EMBL" id="CP001215">
    <property type="protein sequence ID" value="ACP12085.1"/>
    <property type="molecule type" value="Genomic_DNA"/>
</dbReference>
<dbReference type="KEGG" id="bah:BAMEG_5083"/>
<dbReference type="HOGENOM" id="CLU_144811_6_0_9"/>
<dbReference type="GO" id="GO:0005886">
    <property type="term" value="C:plasma membrane"/>
    <property type="evidence" value="ECO:0007669"/>
    <property type="project" value="UniProtKB-SubCell"/>
</dbReference>
<dbReference type="HAMAP" id="MF_00386">
    <property type="entry name" value="UPF0161_YidD"/>
    <property type="match status" value="1"/>
</dbReference>
<dbReference type="InterPro" id="IPR002696">
    <property type="entry name" value="Membr_insert_effic_factor_YidD"/>
</dbReference>
<dbReference type="NCBIfam" id="TIGR00278">
    <property type="entry name" value="membrane protein insertion efficiency factor YidD"/>
    <property type="match status" value="1"/>
</dbReference>
<dbReference type="PANTHER" id="PTHR33383">
    <property type="entry name" value="MEMBRANE PROTEIN INSERTION EFFICIENCY FACTOR-RELATED"/>
    <property type="match status" value="1"/>
</dbReference>
<dbReference type="PANTHER" id="PTHR33383:SF1">
    <property type="entry name" value="MEMBRANE PROTEIN INSERTION EFFICIENCY FACTOR-RELATED"/>
    <property type="match status" value="1"/>
</dbReference>
<dbReference type="Pfam" id="PF01809">
    <property type="entry name" value="YidD"/>
    <property type="match status" value="1"/>
</dbReference>
<dbReference type="SMART" id="SM01234">
    <property type="entry name" value="Haemolytic"/>
    <property type="match status" value="1"/>
</dbReference>
<feature type="chain" id="PRO_1000197739" description="Putative membrane protein insertion efficiency factor">
    <location>
        <begin position="1"/>
        <end position="78"/>
    </location>
</feature>
<sequence length="78" mass="9096">MKQIFIGIIRFYQKFISPMTPPTCRFYPTCSHYGLEAFQKHGAFKGFWLTCKRILKCHPFHPGGFDPVPDKKDDKVNS</sequence>
<name>YIDD_BACAC</name>
<evidence type="ECO:0000255" key="1">
    <source>
        <dbReference type="HAMAP-Rule" id="MF_00386"/>
    </source>
</evidence>
<reference key="1">
    <citation type="submission" date="2008-10" db="EMBL/GenBank/DDBJ databases">
        <title>Genome sequence of Bacillus anthracis str. CDC 684.</title>
        <authorList>
            <person name="Dodson R.J."/>
            <person name="Munk A.C."/>
            <person name="Brettin T."/>
            <person name="Bruce D."/>
            <person name="Detter C."/>
            <person name="Tapia R."/>
            <person name="Han C."/>
            <person name="Sutton G."/>
            <person name="Sims D."/>
        </authorList>
    </citation>
    <scope>NUCLEOTIDE SEQUENCE [LARGE SCALE GENOMIC DNA]</scope>
    <source>
        <strain>CDC 684 / NRRL 3495</strain>
    </source>
</reference>
<protein>
    <recommendedName>
        <fullName evidence="1">Putative membrane protein insertion efficiency factor</fullName>
    </recommendedName>
</protein>
<comment type="function">
    <text evidence="1">Could be involved in insertion of integral membrane proteins into the membrane.</text>
</comment>
<comment type="subcellular location">
    <subcellularLocation>
        <location evidence="1">Cell membrane</location>
        <topology evidence="1">Peripheral membrane protein</topology>
        <orientation evidence="1">Cytoplasmic side</orientation>
    </subcellularLocation>
</comment>
<comment type="similarity">
    <text evidence="1">Belongs to the UPF0161 family.</text>
</comment>
<gene>
    <name type="ordered locus">BAMEG_5083</name>
</gene>